<organism>
    <name type="scientific">Klebsiella pneumoniae subsp. pneumoniae (strain ATCC 700721 / MGH 78578)</name>
    <dbReference type="NCBI Taxonomy" id="272620"/>
    <lineage>
        <taxon>Bacteria</taxon>
        <taxon>Pseudomonadati</taxon>
        <taxon>Pseudomonadota</taxon>
        <taxon>Gammaproteobacteria</taxon>
        <taxon>Enterobacterales</taxon>
        <taxon>Enterobacteriaceae</taxon>
        <taxon>Klebsiella/Raoultella group</taxon>
        <taxon>Klebsiella</taxon>
        <taxon>Klebsiella pneumoniae complex</taxon>
    </lineage>
</organism>
<sequence>MAVLQVLHIPDERLRKVAEPVKEVNAEIQRIVDDMFDTMYAEEGIGLAATQVDIHQRIIVIDVSENREEQLVLINPEMLEKDGETGIEEGCLSIPEQRALVPRAEKVKIRALDRDGKPFELEADGLLAICIQHEMDHLVGKLFIDYLSPLKQQRIRQKVEKLDRLRSRA</sequence>
<accession>A6TEU0</accession>
<name>DEF_KLEP7</name>
<protein>
    <recommendedName>
        <fullName evidence="1">Peptide deformylase</fullName>
        <shortName evidence="1">PDF</shortName>
        <ecNumber evidence="1">3.5.1.88</ecNumber>
    </recommendedName>
    <alternativeName>
        <fullName evidence="1">Polypeptide deformylase</fullName>
    </alternativeName>
</protein>
<comment type="function">
    <text evidence="1">Removes the formyl group from the N-terminal Met of newly synthesized proteins. Requires at least a dipeptide for an efficient rate of reaction. N-terminal L-methionine is a prerequisite for activity but the enzyme has broad specificity at other positions.</text>
</comment>
<comment type="catalytic activity">
    <reaction evidence="1">
        <text>N-terminal N-formyl-L-methionyl-[peptide] + H2O = N-terminal L-methionyl-[peptide] + formate</text>
        <dbReference type="Rhea" id="RHEA:24420"/>
        <dbReference type="Rhea" id="RHEA-COMP:10639"/>
        <dbReference type="Rhea" id="RHEA-COMP:10640"/>
        <dbReference type="ChEBI" id="CHEBI:15377"/>
        <dbReference type="ChEBI" id="CHEBI:15740"/>
        <dbReference type="ChEBI" id="CHEBI:49298"/>
        <dbReference type="ChEBI" id="CHEBI:64731"/>
        <dbReference type="EC" id="3.5.1.88"/>
    </reaction>
</comment>
<comment type="cofactor">
    <cofactor evidence="1">
        <name>Fe(2+)</name>
        <dbReference type="ChEBI" id="CHEBI:29033"/>
    </cofactor>
    <text evidence="1">Binds 1 Fe(2+) ion.</text>
</comment>
<comment type="similarity">
    <text evidence="1">Belongs to the polypeptide deformylase family.</text>
</comment>
<dbReference type="EC" id="3.5.1.88" evidence="1"/>
<dbReference type="EMBL" id="CP000647">
    <property type="protein sequence ID" value="ABR79074.1"/>
    <property type="molecule type" value="Genomic_DNA"/>
</dbReference>
<dbReference type="RefSeq" id="WP_004174081.1">
    <property type="nucleotide sequence ID" value="NC_009648.1"/>
</dbReference>
<dbReference type="SMR" id="A6TEU0"/>
<dbReference type="STRING" id="272620.KPN_03687"/>
<dbReference type="jPOST" id="A6TEU0"/>
<dbReference type="PaxDb" id="272620-KPN_03687"/>
<dbReference type="EnsemblBacteria" id="ABR79074">
    <property type="protein sequence ID" value="ABR79074"/>
    <property type="gene ID" value="KPN_03687"/>
</dbReference>
<dbReference type="KEGG" id="kpn:KPN_03687"/>
<dbReference type="HOGENOM" id="CLU_061901_2_1_6"/>
<dbReference type="Proteomes" id="UP000000265">
    <property type="component" value="Chromosome"/>
</dbReference>
<dbReference type="GO" id="GO:0046872">
    <property type="term" value="F:metal ion binding"/>
    <property type="evidence" value="ECO:0007669"/>
    <property type="project" value="UniProtKB-KW"/>
</dbReference>
<dbReference type="GO" id="GO:0042586">
    <property type="term" value="F:peptide deformylase activity"/>
    <property type="evidence" value="ECO:0007669"/>
    <property type="project" value="UniProtKB-UniRule"/>
</dbReference>
<dbReference type="GO" id="GO:0043686">
    <property type="term" value="P:co-translational protein modification"/>
    <property type="evidence" value="ECO:0007669"/>
    <property type="project" value="TreeGrafter"/>
</dbReference>
<dbReference type="GO" id="GO:0006412">
    <property type="term" value="P:translation"/>
    <property type="evidence" value="ECO:0007669"/>
    <property type="project" value="UniProtKB-UniRule"/>
</dbReference>
<dbReference type="CDD" id="cd00487">
    <property type="entry name" value="Pep_deformylase"/>
    <property type="match status" value="1"/>
</dbReference>
<dbReference type="FunFam" id="3.90.45.10:FF:000001">
    <property type="entry name" value="Peptide deformylase"/>
    <property type="match status" value="1"/>
</dbReference>
<dbReference type="Gene3D" id="3.90.45.10">
    <property type="entry name" value="Peptide deformylase"/>
    <property type="match status" value="1"/>
</dbReference>
<dbReference type="HAMAP" id="MF_00163">
    <property type="entry name" value="Pep_deformylase"/>
    <property type="match status" value="1"/>
</dbReference>
<dbReference type="InterPro" id="IPR023635">
    <property type="entry name" value="Peptide_deformylase"/>
</dbReference>
<dbReference type="InterPro" id="IPR036821">
    <property type="entry name" value="Peptide_deformylase_sf"/>
</dbReference>
<dbReference type="NCBIfam" id="TIGR00079">
    <property type="entry name" value="pept_deformyl"/>
    <property type="match status" value="1"/>
</dbReference>
<dbReference type="NCBIfam" id="NF001159">
    <property type="entry name" value="PRK00150.1-3"/>
    <property type="match status" value="1"/>
</dbReference>
<dbReference type="PANTHER" id="PTHR10458">
    <property type="entry name" value="PEPTIDE DEFORMYLASE"/>
    <property type="match status" value="1"/>
</dbReference>
<dbReference type="PANTHER" id="PTHR10458:SF21">
    <property type="entry name" value="PEPTIDE DEFORMYLASE"/>
    <property type="match status" value="1"/>
</dbReference>
<dbReference type="Pfam" id="PF01327">
    <property type="entry name" value="Pep_deformylase"/>
    <property type="match status" value="1"/>
</dbReference>
<dbReference type="PIRSF" id="PIRSF004749">
    <property type="entry name" value="Pep_def"/>
    <property type="match status" value="1"/>
</dbReference>
<dbReference type="PRINTS" id="PR01576">
    <property type="entry name" value="PDEFORMYLASE"/>
</dbReference>
<dbReference type="SUPFAM" id="SSF56420">
    <property type="entry name" value="Peptide deformylase"/>
    <property type="match status" value="1"/>
</dbReference>
<evidence type="ECO:0000255" key="1">
    <source>
        <dbReference type="HAMAP-Rule" id="MF_00163"/>
    </source>
</evidence>
<proteinExistence type="inferred from homology"/>
<feature type="chain" id="PRO_1000023131" description="Peptide deformylase">
    <location>
        <begin position="1"/>
        <end position="169"/>
    </location>
</feature>
<feature type="active site" evidence="1">
    <location>
        <position position="134"/>
    </location>
</feature>
<feature type="binding site" evidence="1">
    <location>
        <position position="91"/>
    </location>
    <ligand>
        <name>Fe cation</name>
        <dbReference type="ChEBI" id="CHEBI:24875"/>
    </ligand>
</feature>
<feature type="binding site" evidence="1">
    <location>
        <position position="133"/>
    </location>
    <ligand>
        <name>Fe cation</name>
        <dbReference type="ChEBI" id="CHEBI:24875"/>
    </ligand>
</feature>
<feature type="binding site" evidence="1">
    <location>
        <position position="137"/>
    </location>
    <ligand>
        <name>Fe cation</name>
        <dbReference type="ChEBI" id="CHEBI:24875"/>
    </ligand>
</feature>
<keyword id="KW-0378">Hydrolase</keyword>
<keyword id="KW-0408">Iron</keyword>
<keyword id="KW-0479">Metal-binding</keyword>
<keyword id="KW-0648">Protein biosynthesis</keyword>
<reference key="1">
    <citation type="submission" date="2006-09" db="EMBL/GenBank/DDBJ databases">
        <authorList>
            <consortium name="The Klebsiella pneumonia Genome Sequencing Project"/>
            <person name="McClelland M."/>
            <person name="Sanderson E.K."/>
            <person name="Spieth J."/>
            <person name="Clifton W.S."/>
            <person name="Latreille P."/>
            <person name="Sabo A."/>
            <person name="Pepin K."/>
            <person name="Bhonagiri V."/>
            <person name="Porwollik S."/>
            <person name="Ali J."/>
            <person name="Wilson R.K."/>
        </authorList>
    </citation>
    <scope>NUCLEOTIDE SEQUENCE [LARGE SCALE GENOMIC DNA]</scope>
    <source>
        <strain>ATCC 700721 / MGH 78578</strain>
    </source>
</reference>
<gene>
    <name evidence="1" type="primary">def</name>
    <name type="ordered locus">KPN78578_36500</name>
    <name type="ORF">KPN_03687</name>
</gene>